<dbReference type="EMBL" id="AB006628">
    <property type="protein sequence ID" value="BAA22959.1"/>
    <property type="status" value="ALT_INIT"/>
    <property type="molecule type" value="mRNA"/>
</dbReference>
<dbReference type="EMBL" id="AK291410">
    <property type="protein sequence ID" value="BAF84099.1"/>
    <property type="molecule type" value="mRNA"/>
</dbReference>
<dbReference type="EMBL" id="AK303623">
    <property type="protein sequence ID" value="BAG64632.1"/>
    <property type="molecule type" value="mRNA"/>
</dbReference>
<dbReference type="EMBL" id="AC008761">
    <property type="status" value="NOT_ANNOTATED_CDS"/>
    <property type="molecule type" value="Genomic_DNA"/>
</dbReference>
<dbReference type="EMBL" id="CH471106">
    <property type="protein sequence ID" value="EAW84629.1"/>
    <property type="molecule type" value="Genomic_DNA"/>
</dbReference>
<dbReference type="EMBL" id="BC028021">
    <property type="protein sequence ID" value="AAH28021.1"/>
    <property type="molecule type" value="mRNA"/>
</dbReference>
<dbReference type="EMBL" id="BC041130">
    <property type="protein sequence ID" value="AAH41130.1"/>
    <property type="molecule type" value="mRNA"/>
</dbReference>
<dbReference type="CCDS" id="CCDS32955.1">
    <molecule id="O14526-1"/>
</dbReference>
<dbReference type="CCDS" id="CCDS59366.1">
    <molecule id="O14526-3"/>
</dbReference>
<dbReference type="PIR" id="T00039">
    <property type="entry name" value="T00039"/>
</dbReference>
<dbReference type="RefSeq" id="NP_001154829.1">
    <property type="nucleotide sequence ID" value="NM_001161357.1"/>
</dbReference>
<dbReference type="RefSeq" id="NP_001154830.1">
    <molecule id="O14526-1"/>
    <property type="nucleotide sequence ID" value="NM_001161358.2"/>
</dbReference>
<dbReference type="RefSeq" id="NP_001154831.1">
    <molecule id="O14526-3"/>
    <property type="nucleotide sequence ID" value="NM_001161359.2"/>
</dbReference>
<dbReference type="RefSeq" id="NP_001371299.1">
    <molecule id="O14526-1"/>
    <property type="nucleotide sequence ID" value="NM_001384370.1"/>
</dbReference>
<dbReference type="RefSeq" id="NP_001371300.1">
    <molecule id="O14526-1"/>
    <property type="nucleotide sequence ID" value="NM_001384371.1"/>
</dbReference>
<dbReference type="RefSeq" id="NP_001371301.1">
    <molecule id="O14526-1"/>
    <property type="nucleotide sequence ID" value="NM_001384372.1"/>
</dbReference>
<dbReference type="RefSeq" id="NP_001371302.1">
    <molecule id="O14526-1"/>
    <property type="nucleotide sequence ID" value="NM_001384373.1"/>
</dbReference>
<dbReference type="RefSeq" id="NP_001371303.1">
    <molecule id="O14526-1"/>
    <property type="nucleotide sequence ID" value="NM_001384374.1"/>
</dbReference>
<dbReference type="RefSeq" id="NP_001371304.1">
    <molecule id="O14526-1"/>
    <property type="nucleotide sequence ID" value="NM_001384375.1"/>
</dbReference>
<dbReference type="RefSeq" id="NP_001371305.1">
    <molecule id="O14526-1"/>
    <property type="nucleotide sequence ID" value="NM_001384376.1"/>
</dbReference>
<dbReference type="RefSeq" id="NP_001371306.1">
    <molecule id="O14526-1"/>
    <property type="nucleotide sequence ID" value="NM_001384377.1"/>
</dbReference>
<dbReference type="RefSeq" id="NP_001371307.1">
    <molecule id="O14526-1"/>
    <property type="nucleotide sequence ID" value="NM_001384378.1"/>
</dbReference>
<dbReference type="RefSeq" id="NP_001371308.1">
    <molecule id="O14526-1"/>
    <property type="nucleotide sequence ID" value="NM_001384379.1"/>
</dbReference>
<dbReference type="RefSeq" id="NP_001371309.1">
    <molecule id="O14526-1"/>
    <property type="nucleotide sequence ID" value="NM_001384380.1"/>
</dbReference>
<dbReference type="RefSeq" id="NP_001371310.1">
    <molecule id="O14526-1"/>
    <property type="nucleotide sequence ID" value="NM_001384381.1"/>
</dbReference>
<dbReference type="RefSeq" id="NP_001371313.1">
    <molecule id="O14526-3"/>
    <property type="nucleotide sequence ID" value="NM_001384384.1"/>
</dbReference>
<dbReference type="RefSeq" id="NP_001371314.1">
    <molecule id="O14526-3"/>
    <property type="nucleotide sequence ID" value="NM_001384385.1"/>
</dbReference>
<dbReference type="RefSeq" id="NP_001371315.1">
    <molecule id="O14526-3"/>
    <property type="nucleotide sequence ID" value="NM_001384386.1"/>
</dbReference>
<dbReference type="RefSeq" id="NP_055937.1">
    <molecule id="O14526-1"/>
    <property type="nucleotide sequence ID" value="NM_015122.3"/>
</dbReference>
<dbReference type="RefSeq" id="XP_006722764.1">
    <property type="nucleotide sequence ID" value="XM_006722701.3"/>
</dbReference>
<dbReference type="RefSeq" id="XP_006722765.1">
    <property type="nucleotide sequence ID" value="XM_006722702.3"/>
</dbReference>
<dbReference type="RefSeq" id="XP_011526126.1">
    <property type="nucleotide sequence ID" value="XM_011527824.2"/>
</dbReference>
<dbReference type="RefSeq" id="XP_011526127.1">
    <property type="nucleotide sequence ID" value="XM_011527825.2"/>
</dbReference>
<dbReference type="RefSeq" id="XP_011526128.1">
    <property type="nucleotide sequence ID" value="XM_011527826.2"/>
</dbReference>
<dbReference type="RefSeq" id="XP_011526130.1">
    <property type="nucleotide sequence ID" value="XM_011527828.2"/>
</dbReference>
<dbReference type="RefSeq" id="XP_016882008.1">
    <property type="nucleotide sequence ID" value="XM_017026519.1"/>
</dbReference>
<dbReference type="RefSeq" id="XP_016882009.1">
    <property type="nucleotide sequence ID" value="XM_017026520.1"/>
</dbReference>
<dbReference type="RefSeq" id="XP_016882010.1">
    <property type="nucleotide sequence ID" value="XM_017026521.1"/>
</dbReference>
<dbReference type="PDB" id="7OHI">
    <property type="method" value="X-ray"/>
    <property type="resolution" value="1.41 A"/>
    <property type="chains" value="B=426-448"/>
</dbReference>
<dbReference type="PDBsum" id="7OHI"/>
<dbReference type="SMR" id="O14526"/>
<dbReference type="BioGRID" id="116764">
    <property type="interactions" value="73"/>
</dbReference>
<dbReference type="FunCoup" id="O14526">
    <property type="interactions" value="1692"/>
</dbReference>
<dbReference type="IntAct" id="O14526">
    <property type="interactions" value="28"/>
</dbReference>
<dbReference type="MINT" id="O14526"/>
<dbReference type="STRING" id="9606.ENSP00000473001"/>
<dbReference type="GlyGen" id="O14526">
    <property type="glycosylation" value="2 sites, 1 O-linked glycan (1 site)"/>
</dbReference>
<dbReference type="iPTMnet" id="O14526"/>
<dbReference type="MetOSite" id="O14526"/>
<dbReference type="PhosphoSitePlus" id="O14526"/>
<dbReference type="BioMuta" id="FCHO1"/>
<dbReference type="jPOST" id="O14526"/>
<dbReference type="MassIVE" id="O14526"/>
<dbReference type="PaxDb" id="9606-ENSP00000473001"/>
<dbReference type="PeptideAtlas" id="O14526"/>
<dbReference type="ProteomicsDB" id="48073">
    <molecule id="O14526-1"/>
</dbReference>
<dbReference type="ProteomicsDB" id="48074">
    <molecule id="O14526-2"/>
</dbReference>
<dbReference type="Pumba" id="O14526"/>
<dbReference type="Antibodypedia" id="27790">
    <property type="antibodies" value="111 antibodies from 21 providers"/>
</dbReference>
<dbReference type="DNASU" id="23149"/>
<dbReference type="Ensembl" id="ENST00000595033.5">
    <molecule id="O14526-3"/>
    <property type="protein sequence ID" value="ENSP00000472668.1"/>
    <property type="gene ID" value="ENSG00000130475.16"/>
</dbReference>
<dbReference type="Ensembl" id="ENST00000596309.6">
    <molecule id="O14526-1"/>
    <property type="protein sequence ID" value="ENSP00000470511.2"/>
    <property type="gene ID" value="ENSG00000130475.16"/>
</dbReference>
<dbReference type="Ensembl" id="ENST00000596536.6">
    <molecule id="O14526-1"/>
    <property type="protein sequence ID" value="ENSP00000470731.1"/>
    <property type="gene ID" value="ENSG00000130475.16"/>
</dbReference>
<dbReference type="Ensembl" id="ENST00000596951.6">
    <molecule id="O14526-1"/>
    <property type="protein sequence ID" value="ENSP00000472417.1"/>
    <property type="gene ID" value="ENSG00000130475.16"/>
</dbReference>
<dbReference type="Ensembl" id="ENST00000600209.6">
    <molecule id="O14526-1"/>
    <property type="protein sequence ID" value="ENSP00000469075.2"/>
    <property type="gene ID" value="ENSG00000130475.16"/>
</dbReference>
<dbReference type="Ensembl" id="ENST00000600676.5">
    <molecule id="O14526-1"/>
    <property type="protein sequence ID" value="ENSP00000470493.1"/>
    <property type="gene ID" value="ENSG00000130475.16"/>
</dbReference>
<dbReference type="Ensembl" id="ENST00000699176.1">
    <molecule id="O14526-1"/>
    <property type="protein sequence ID" value="ENSP00000514179.1"/>
    <property type="gene ID" value="ENSG00000130475.16"/>
</dbReference>
<dbReference type="Ensembl" id="ENST00000699177.1">
    <molecule id="O14526-1"/>
    <property type="protein sequence ID" value="ENSP00000514180.1"/>
    <property type="gene ID" value="ENSG00000130475.16"/>
</dbReference>
<dbReference type="Ensembl" id="ENST00000699207.1">
    <molecule id="O14526-1"/>
    <property type="protein sequence ID" value="ENSP00000514204.1"/>
    <property type="gene ID" value="ENSG00000130475.16"/>
</dbReference>
<dbReference type="Ensembl" id="ENST00000699209.1">
    <molecule id="O14526-1"/>
    <property type="protein sequence ID" value="ENSP00000514206.1"/>
    <property type="gene ID" value="ENSG00000130475.16"/>
</dbReference>
<dbReference type="Ensembl" id="ENST00000699215.1">
    <molecule id="O14526-1"/>
    <property type="protein sequence ID" value="ENSP00000514211.1"/>
    <property type="gene ID" value="ENSG00000130475.16"/>
</dbReference>
<dbReference type="GeneID" id="23149"/>
<dbReference type="KEGG" id="hsa:23149"/>
<dbReference type="MANE-Select" id="ENST00000596536.6">
    <property type="protein sequence ID" value="ENSP00000470731.1"/>
    <property type="RefSeq nucleotide sequence ID" value="NM_015122.3"/>
    <property type="RefSeq protein sequence ID" value="NP_055937.1"/>
</dbReference>
<dbReference type="UCSC" id="uc010ebb.3">
    <molecule id="O14526-1"/>
    <property type="organism name" value="human"/>
</dbReference>
<dbReference type="AGR" id="HGNC:29002"/>
<dbReference type="CTD" id="23149"/>
<dbReference type="DisGeNET" id="23149"/>
<dbReference type="GeneCards" id="FCHO1"/>
<dbReference type="HGNC" id="HGNC:29002">
    <property type="gene designation" value="FCHO1"/>
</dbReference>
<dbReference type="HPA" id="ENSG00000130475">
    <property type="expression patterns" value="Tissue enhanced (brain, lymphoid tissue, skin)"/>
</dbReference>
<dbReference type="MalaCards" id="FCHO1"/>
<dbReference type="MIM" id="613437">
    <property type="type" value="gene"/>
</dbReference>
<dbReference type="MIM" id="619164">
    <property type="type" value="phenotype"/>
</dbReference>
<dbReference type="neXtProt" id="NX_O14526"/>
<dbReference type="OpenTargets" id="ENSG00000130475"/>
<dbReference type="Orphanet" id="647804">
    <property type="disease" value="Combined immunodeficiency due to FCHO1 deficiency"/>
</dbReference>
<dbReference type="PharmGKB" id="PA134870625"/>
<dbReference type="VEuPathDB" id="HostDB:ENSG00000130475"/>
<dbReference type="eggNOG" id="KOG2398">
    <property type="taxonomic scope" value="Eukaryota"/>
</dbReference>
<dbReference type="GeneTree" id="ENSGT00940000160489"/>
<dbReference type="HOGENOM" id="CLU_007107_0_0_1"/>
<dbReference type="InParanoid" id="O14526"/>
<dbReference type="OMA" id="TDSAVMD"/>
<dbReference type="OrthoDB" id="5593455at2759"/>
<dbReference type="PAN-GO" id="O14526">
    <property type="GO annotations" value="5 GO annotations based on evolutionary models"/>
</dbReference>
<dbReference type="PhylomeDB" id="O14526"/>
<dbReference type="TreeFam" id="TF328986"/>
<dbReference type="PathwayCommons" id="O14526"/>
<dbReference type="Reactome" id="R-HSA-8856825">
    <property type="pathway name" value="Cargo recognition for clathrin-mediated endocytosis"/>
</dbReference>
<dbReference type="Reactome" id="R-HSA-8856828">
    <property type="pathway name" value="Clathrin-mediated endocytosis"/>
</dbReference>
<dbReference type="SignaLink" id="O14526"/>
<dbReference type="SIGNOR" id="O14526"/>
<dbReference type="BioGRID-ORCS" id="23149">
    <property type="hits" value="18 hits in 1152 CRISPR screens"/>
</dbReference>
<dbReference type="ChiTaRS" id="FCHO1">
    <property type="organism name" value="human"/>
</dbReference>
<dbReference type="GenomeRNAi" id="23149"/>
<dbReference type="Pharos" id="O14526">
    <property type="development level" value="Tbio"/>
</dbReference>
<dbReference type="PRO" id="PR:O14526"/>
<dbReference type="Proteomes" id="UP000005640">
    <property type="component" value="Chromosome 19"/>
</dbReference>
<dbReference type="RNAct" id="O14526">
    <property type="molecule type" value="protein"/>
</dbReference>
<dbReference type="Bgee" id="ENSG00000130475">
    <property type="expression patterns" value="Expressed in granulocyte and 135 other cell types or tissues"/>
</dbReference>
<dbReference type="ExpressionAtlas" id="O14526">
    <property type="expression patterns" value="baseline and differential"/>
</dbReference>
<dbReference type="GO" id="GO:0005905">
    <property type="term" value="C:clathrin-coated pit"/>
    <property type="evidence" value="ECO:0000314"/>
    <property type="project" value="ParkinsonsUK-UCL"/>
</dbReference>
<dbReference type="GO" id="GO:0005737">
    <property type="term" value="C:cytoplasm"/>
    <property type="evidence" value="ECO:0000318"/>
    <property type="project" value="GO_Central"/>
</dbReference>
<dbReference type="GO" id="GO:0005829">
    <property type="term" value="C:cytosol"/>
    <property type="evidence" value="ECO:0000314"/>
    <property type="project" value="HPA"/>
</dbReference>
<dbReference type="GO" id="GO:0005654">
    <property type="term" value="C:nucleoplasm"/>
    <property type="evidence" value="ECO:0000314"/>
    <property type="project" value="HPA"/>
</dbReference>
<dbReference type="GO" id="GO:0005886">
    <property type="term" value="C:plasma membrane"/>
    <property type="evidence" value="ECO:0000314"/>
    <property type="project" value="UniProtKB"/>
</dbReference>
<dbReference type="GO" id="GO:0098843">
    <property type="term" value="C:postsynaptic endocytic zone"/>
    <property type="evidence" value="ECO:0007669"/>
    <property type="project" value="Ensembl"/>
</dbReference>
<dbReference type="GO" id="GO:0035612">
    <property type="term" value="F:AP-2 adaptor complex binding"/>
    <property type="evidence" value="ECO:0000314"/>
    <property type="project" value="MGI"/>
</dbReference>
<dbReference type="GO" id="GO:0048268">
    <property type="term" value="P:clathrin coat assembly"/>
    <property type="evidence" value="ECO:0000315"/>
    <property type="project" value="UniProtKB"/>
</dbReference>
<dbReference type="GO" id="GO:0072583">
    <property type="term" value="P:clathrin-dependent endocytosis"/>
    <property type="evidence" value="ECO:0000315"/>
    <property type="project" value="UniProtKB"/>
</dbReference>
<dbReference type="GO" id="GO:0050870">
    <property type="term" value="P:positive regulation of T cell activation"/>
    <property type="evidence" value="ECO:0000315"/>
    <property type="project" value="UniProtKB"/>
</dbReference>
<dbReference type="GO" id="GO:0050852">
    <property type="term" value="P:T cell receptor signaling pathway"/>
    <property type="evidence" value="ECO:0000315"/>
    <property type="project" value="UniProtKB"/>
</dbReference>
<dbReference type="CDD" id="cd07674">
    <property type="entry name" value="F-BAR_FCHO1"/>
    <property type="match status" value="1"/>
</dbReference>
<dbReference type="FunFam" id="1.20.1270.60:FF:000016">
    <property type="entry name" value="FCH domain only protein 2"/>
    <property type="match status" value="1"/>
</dbReference>
<dbReference type="Gene3D" id="1.20.1270.60">
    <property type="entry name" value="Arfaptin homology (AH) domain/BAR domain"/>
    <property type="match status" value="1"/>
</dbReference>
<dbReference type="InterPro" id="IPR027267">
    <property type="entry name" value="AH/BAR_dom_sf"/>
</dbReference>
<dbReference type="InterPro" id="IPR031160">
    <property type="entry name" value="F_BAR"/>
</dbReference>
<dbReference type="InterPro" id="IPR001060">
    <property type="entry name" value="FCH_dom"/>
</dbReference>
<dbReference type="InterPro" id="IPR042735">
    <property type="entry name" value="FCHO1_F-BAR"/>
</dbReference>
<dbReference type="InterPro" id="IPR054713">
    <property type="entry name" value="GMIP/FCHO2-like_FCH"/>
</dbReference>
<dbReference type="InterPro" id="IPR028565">
    <property type="entry name" value="MHD"/>
</dbReference>
<dbReference type="InterPro" id="IPR018808">
    <property type="entry name" value="Muniscin_C"/>
</dbReference>
<dbReference type="PANTHER" id="PTHR23065:SF6">
    <property type="entry name" value="F-BAR DOMAIN ONLY PROTEIN 1"/>
    <property type="match status" value="1"/>
</dbReference>
<dbReference type="PANTHER" id="PTHR23065">
    <property type="entry name" value="PROLINE-SERINE-THREONINE PHOSPHATASE INTERACTING PROTEIN 1"/>
    <property type="match status" value="1"/>
</dbReference>
<dbReference type="Pfam" id="PF22699">
    <property type="entry name" value="GMIP-like_FCH"/>
    <property type="match status" value="1"/>
</dbReference>
<dbReference type="Pfam" id="PF10291">
    <property type="entry name" value="muHD"/>
    <property type="match status" value="1"/>
</dbReference>
<dbReference type="SMART" id="SM00055">
    <property type="entry name" value="FCH"/>
    <property type="match status" value="1"/>
</dbReference>
<dbReference type="SUPFAM" id="SSF103657">
    <property type="entry name" value="BAR/IMD domain-like"/>
    <property type="match status" value="1"/>
</dbReference>
<dbReference type="PROSITE" id="PS51741">
    <property type="entry name" value="F_BAR"/>
    <property type="match status" value="1"/>
</dbReference>
<dbReference type="PROSITE" id="PS51072">
    <property type="entry name" value="MHD"/>
    <property type="match status" value="1"/>
</dbReference>
<organism>
    <name type="scientific">Homo sapiens</name>
    <name type="common">Human</name>
    <dbReference type="NCBI Taxonomy" id="9606"/>
    <lineage>
        <taxon>Eukaryota</taxon>
        <taxon>Metazoa</taxon>
        <taxon>Chordata</taxon>
        <taxon>Craniata</taxon>
        <taxon>Vertebrata</taxon>
        <taxon>Euteleostomi</taxon>
        <taxon>Mammalia</taxon>
        <taxon>Eutheria</taxon>
        <taxon>Euarchontoglires</taxon>
        <taxon>Primates</taxon>
        <taxon>Haplorrhini</taxon>
        <taxon>Catarrhini</taxon>
        <taxon>Hominidae</taxon>
        <taxon>Homo</taxon>
    </lineage>
</organism>
<sequence>MSYFGEHFWGEKNHGFEVLYHSVKQGPISTKELADFIRERATIEETYSKAMAKLSKLASNGTPMGTFAPLWEVFRVSSDKLALCHLELTRKLQDLIKDVLRYGEEQLKTHKKCKEEVVSTLDAVQVLSGVSQLLPKSRENYLNRCMDQERLRRESTSQKEMDKAETKTKKAAESLRRSVEKYNSARADFEQKMLDSALRFQAMEETHLRHMKALLGSYAHSVEDTHVQIGQVHEEFKQNIENVSVEMLLRKFAESKGTGREKPGPLDFEAYSAAALQEAMKRLRGAKAFRLPGLSRREREPEPPAAVDFLEPDSGTCPEVDEEGFTVRPDVTQNSTAEPSRFSSSDSDFDDEEPRKFYVHIKPAPARAPACSPEAAAAQLRATAGSLILPPGPGGTMKRHSSRDAAGKPQRPRSAPRTSSCAERLQSEEQVSKNLFGPPLESAFDHEDFTGSSSLGFTSSPSPFSSSSPENVEDSGLDSPSHAAPGPSPDSWVPRPGTPQSPPSCRAPPPEARGIRAPPLPDSPQPLASSPGPWGLEALAGGDLMPAPADPTAREGLAAPPRRLRSRKVSCPLTRSNGDLSRSLSPSPLGSSAASTALERPSFLSQTGHGVSRGPSPVVLGSQDALPIATAFTEYVHAYFRGHSPSCLARVTGELTMTFPAGIVRVFSGTPPPPVLSFRLVHTTAIEHFQPNADLLFSDPSQSDPETKDFWLNMAALTEALQRQAEQNPTASYYNVVLLRYQFSRPGPQSVPLQLSAHWQCGATLTQVSVEYGYRPGATAVPTPLTNVQILLPVGEPVTNVRLQPAATWNLEEKRLTWRLPDVSEAGGSGRLSASWEPLSGPSTPSPVAAQFTSEGTTLSGVDLELVGSGYRMSLVKRRFATGMYLVSC</sequence>
<comment type="function">
    <text evidence="6 8 9">Functions in an early step of clathrin-mediated endocytosis (PubMed:30822429). Has both a membrane binding/bending activity and the ability to recruit proteins essential to the formation of functional clathrin-coated pits. May regulate Bmp signaling by regulating clathrin-mediated endocytosis of Bmp receptors. Involved in the regulation of T-cell poliferation and activation (PubMed:30822429, PubMed:32098969). Affects TCR clustering upon receptor triggering and modulates its internalisation, playing a role in TCR-dependent T-cell activation (PubMed:32098969).</text>
</comment>
<comment type="subunit">
    <text evidence="1 7">May oligomerize and form homotetramer (By similarity). Interacts with AP2A2 and AP2B1; 2 subunits of the adaptor protein complex AP-2 (By similarity). Interacts with DAB2. Interacts with clathrin (CLTC or CLTCL1). Interacts with EPS15, EPS15R and ITSN1. Interacts with AGFG1 and CALM. May interact with ACVR1; linking this receptor to clathrin-mediated endocytosis (PubMed:22484487).</text>
</comment>
<comment type="interaction">
    <interactant intactId="EBI-719823">
        <id>O14526</id>
    </interactant>
    <interactant intactId="EBI-371876">
        <id>Q9NQT4</id>
        <label>EXOSC5</label>
    </interactant>
    <organismsDiffer>false</organismsDiffer>
    <experiments>4</experiments>
</comment>
<comment type="interaction">
    <interactant intactId="EBI-719823">
        <id>O14526</id>
    </interactant>
    <interactant intactId="EBI-10274069">
        <id>Q8TCE9</id>
        <label>LGALS14</label>
    </interactant>
    <organismsDiffer>false</organismsDiffer>
    <experiments>4</experiments>
</comment>
<comment type="interaction">
    <interactant intactId="EBI-719823">
        <id>O14526</id>
    </interactant>
    <interactant intactId="EBI-1383632">
        <id>Q13882</id>
        <label>PTK6</label>
    </interactant>
    <organismsDiffer>false</organismsDiffer>
    <experiments>4</experiments>
</comment>
<comment type="interaction">
    <interactant intactId="EBI-719823">
        <id>O14526</id>
    </interactant>
    <interactant intactId="EBI-6095043">
        <id>A7BFV9</id>
        <label>Eps15</label>
    </interactant>
    <organismsDiffer>true</organismsDiffer>
    <experiments>2</experiments>
</comment>
<comment type="subcellular location">
    <subcellularLocation>
        <location evidence="13 14 15">Membrane</location>
        <location evidence="13 14 15">Clathrin-coated pit</location>
        <topology evidence="13 14">Peripheral membrane protein</topology>
        <orientation evidence="13 14">Cytoplasmic side</orientation>
    </subcellularLocation>
    <text>Associated with forming but not mature clathrin-coated vesicles. The recruitment to coated-pits precede the one of clathrin and the adaptor protein complex AP-2. According to PubMed:17617719 it may also dynamically associate with Golgi/TGN membranes.</text>
</comment>
<comment type="alternative products">
    <event type="alternative splicing"/>
    <isoform>
        <id>O14526-1</id>
        <name>1</name>
        <sequence type="displayed"/>
    </isoform>
    <isoform>
        <id>O14526-2</id>
        <name>2</name>
        <sequence type="described" ref="VSP_022338"/>
    </isoform>
    <isoform>
        <id>O14526-3</id>
        <name>3</name>
        <sequence type="described" ref="VSP_046906"/>
    </isoform>
</comment>
<comment type="tissue specificity">
    <text evidence="8">Predominantly expressed in lymphoid cells.</text>
</comment>
<comment type="disease" evidence="8 9">
    <disease id="DI-06026">
        <name>Immunodeficiency 76</name>
        <acronym>IMD76</acronym>
        <description>An autosomal recessive immunologic disorder characterized by onset of recurrent bacterial, viral, and fungal infections in early childhood. Affected individuals have T-cell lymphopenia and variable B-cell or immunoglobulin abnormalities. Some patients develop B-cell lymphoma, others manifest neurologic features.</description>
        <dbReference type="MIM" id="619164"/>
    </disease>
    <text>The disease is caused by variants affecting the gene represented in this entry.</text>
</comment>
<comment type="similarity">
    <text evidence="12">Belongs to the FCHO family.</text>
</comment>
<comment type="sequence caution" evidence="12">
    <conflict type="erroneous initiation">
        <sequence resource="EMBL-CDS" id="BAA22959"/>
    </conflict>
    <text>Extended N-terminus.</text>
</comment>
<keyword id="KW-0002">3D-structure</keyword>
<keyword id="KW-0025">Alternative splicing</keyword>
<keyword id="KW-0168">Coated pit</keyword>
<keyword id="KW-0175">Coiled coil</keyword>
<keyword id="KW-0225">Disease variant</keyword>
<keyword id="KW-0254">Endocytosis</keyword>
<keyword id="KW-0472">Membrane</keyword>
<keyword id="KW-0597">Phosphoprotein</keyword>
<keyword id="KW-1267">Proteomics identification</keyword>
<keyword id="KW-1185">Reference proteome</keyword>
<proteinExistence type="evidence at protein level"/>
<feature type="chain" id="PRO_0000271759" description="F-BAR domain only protein 1">
    <location>
        <begin position="1"/>
        <end position="889"/>
    </location>
</feature>
<feature type="domain" description="F-BAR" evidence="4">
    <location>
        <begin position="1"/>
        <end position="248"/>
    </location>
</feature>
<feature type="domain" description="MHD" evidence="3">
    <location>
        <begin position="625"/>
        <end position="888"/>
    </location>
</feature>
<feature type="region of interest" description="Mediates membrane-binding">
    <location>
        <begin position="1"/>
        <end position="275"/>
    </location>
</feature>
<feature type="region of interest" description="Mediates interaction with the adaptor protein complex AP-2">
    <location>
        <begin position="267"/>
        <end position="442"/>
    </location>
</feature>
<feature type="region of interest" description="Disordered" evidence="5">
    <location>
        <begin position="294"/>
        <end position="352"/>
    </location>
</feature>
<feature type="region of interest" description="Disordered" evidence="5">
    <location>
        <begin position="382"/>
        <end position="596"/>
    </location>
</feature>
<feature type="region of interest" description="Mediates interaction with AGFG1, CALM, DAB2, EPS15, EPS15R, ITSN1 and clathrin" evidence="7">
    <location>
        <begin position="609"/>
        <end position="889"/>
    </location>
</feature>
<feature type="region of interest" description="Disordered" evidence="5">
    <location>
        <begin position="826"/>
        <end position="849"/>
    </location>
</feature>
<feature type="coiled-coil region" evidence="2">
    <location>
        <begin position="156"/>
        <end position="195"/>
    </location>
</feature>
<feature type="compositionally biased region" description="Low complexity" evidence="5">
    <location>
        <begin position="450"/>
        <end position="469"/>
    </location>
</feature>
<feature type="compositionally biased region" description="Pro residues" evidence="5">
    <location>
        <begin position="496"/>
        <end position="511"/>
    </location>
</feature>
<feature type="compositionally biased region" description="Low complexity" evidence="5">
    <location>
        <begin position="580"/>
        <end position="596"/>
    </location>
</feature>
<feature type="modified residue" description="Phosphoserine" evidence="18">
    <location>
        <position position="295"/>
    </location>
</feature>
<feature type="modified residue" description="Phosphoserine" evidence="18">
    <location>
        <position position="347"/>
    </location>
</feature>
<feature type="modified residue" description="Phosphoserine" evidence="18">
    <location>
        <position position="372"/>
    </location>
</feature>
<feature type="modified residue" description="Phosphoserine" evidence="1">
    <location>
        <position position="530"/>
    </location>
</feature>
<feature type="modified residue" description="Phosphoserine" evidence="17">
    <location>
        <position position="616"/>
    </location>
</feature>
<feature type="splice variant" id="VSP_046906" description="In isoform 3." evidence="10">
    <location>
        <begin position="1"/>
        <end position="50"/>
    </location>
</feature>
<feature type="splice variant" id="VSP_022338" description="In isoform 2." evidence="11">
    <original>GMYLVSC</original>
    <variation>AAPPQG</variation>
    <location>
        <begin position="883"/>
        <end position="889"/>
    </location>
</feature>
<feature type="sequence variant" id="VAR_085363" description="In IMD76; no effect on protein levels; formation of large cell membrane-dissociated agglomerations; failed to facilitate the formation of clathrin-coated vesicles; impaired TCR internalization." evidence="9">
    <original>A</original>
    <variation>P</variation>
    <location>
        <position position="34"/>
    </location>
</feature>
<feature type="sequence variant" id="VAR_085364" description="In IMD76." evidence="9">
    <location>
        <begin position="650"/>
        <end position="889"/>
    </location>
</feature>
<feature type="sequence variant" id="VAR_085365" description="In IMD76; no effect on protein levels; loss of clathrin-coated vesicles location and association with cell membrane; failed to facilitate the formation of clathrin-coated vesicles; impaired TCR internalization." evidence="9">
    <original>R</original>
    <variation>P</variation>
    <location>
        <position position="679"/>
    </location>
</feature>
<feature type="helix" evidence="19">
    <location>
        <begin position="429"/>
        <end position="435"/>
    </location>
</feature>
<reference key="1">
    <citation type="journal article" date="1997" name="DNA Res.">
        <title>Construction and characterization of human brain cDNA libraries suitable for analysis of cDNA clones encoding relatively large proteins.</title>
        <authorList>
            <person name="Ohara O."/>
            <person name="Nagase T."/>
            <person name="Ishikawa K."/>
            <person name="Nakajima D."/>
            <person name="Ohira M."/>
            <person name="Seki N."/>
            <person name="Nomura N."/>
        </authorList>
    </citation>
    <scope>NUCLEOTIDE SEQUENCE [LARGE SCALE MRNA] (ISOFORM 1)</scope>
    <source>
        <tissue>Brain</tissue>
    </source>
</reference>
<reference key="2">
    <citation type="journal article" date="2004" name="Nat. Genet.">
        <title>Complete sequencing and characterization of 21,243 full-length human cDNAs.</title>
        <authorList>
            <person name="Ota T."/>
            <person name="Suzuki Y."/>
            <person name="Nishikawa T."/>
            <person name="Otsuki T."/>
            <person name="Sugiyama T."/>
            <person name="Irie R."/>
            <person name="Wakamatsu A."/>
            <person name="Hayashi K."/>
            <person name="Sato H."/>
            <person name="Nagai K."/>
            <person name="Kimura K."/>
            <person name="Makita H."/>
            <person name="Sekine M."/>
            <person name="Obayashi M."/>
            <person name="Nishi T."/>
            <person name="Shibahara T."/>
            <person name="Tanaka T."/>
            <person name="Ishii S."/>
            <person name="Yamamoto J."/>
            <person name="Saito K."/>
            <person name="Kawai Y."/>
            <person name="Isono Y."/>
            <person name="Nakamura Y."/>
            <person name="Nagahari K."/>
            <person name="Murakami K."/>
            <person name="Yasuda T."/>
            <person name="Iwayanagi T."/>
            <person name="Wagatsuma M."/>
            <person name="Shiratori A."/>
            <person name="Sudo H."/>
            <person name="Hosoiri T."/>
            <person name="Kaku Y."/>
            <person name="Kodaira H."/>
            <person name="Kondo H."/>
            <person name="Sugawara M."/>
            <person name="Takahashi M."/>
            <person name="Kanda K."/>
            <person name="Yokoi T."/>
            <person name="Furuya T."/>
            <person name="Kikkawa E."/>
            <person name="Omura Y."/>
            <person name="Abe K."/>
            <person name="Kamihara K."/>
            <person name="Katsuta N."/>
            <person name="Sato K."/>
            <person name="Tanikawa M."/>
            <person name="Yamazaki M."/>
            <person name="Ninomiya K."/>
            <person name="Ishibashi T."/>
            <person name="Yamashita H."/>
            <person name="Murakawa K."/>
            <person name="Fujimori K."/>
            <person name="Tanai H."/>
            <person name="Kimata M."/>
            <person name="Watanabe M."/>
            <person name="Hiraoka S."/>
            <person name="Chiba Y."/>
            <person name="Ishida S."/>
            <person name="Ono Y."/>
            <person name="Takiguchi S."/>
            <person name="Watanabe S."/>
            <person name="Yosida M."/>
            <person name="Hotuta T."/>
            <person name="Kusano J."/>
            <person name="Kanehori K."/>
            <person name="Takahashi-Fujii A."/>
            <person name="Hara H."/>
            <person name="Tanase T.-O."/>
            <person name="Nomura Y."/>
            <person name="Togiya S."/>
            <person name="Komai F."/>
            <person name="Hara R."/>
            <person name="Takeuchi K."/>
            <person name="Arita M."/>
            <person name="Imose N."/>
            <person name="Musashino K."/>
            <person name="Yuuki H."/>
            <person name="Oshima A."/>
            <person name="Sasaki N."/>
            <person name="Aotsuka S."/>
            <person name="Yoshikawa Y."/>
            <person name="Matsunawa H."/>
            <person name="Ichihara T."/>
            <person name="Shiohata N."/>
            <person name="Sano S."/>
            <person name="Moriya S."/>
            <person name="Momiyama H."/>
            <person name="Satoh N."/>
            <person name="Takami S."/>
            <person name="Terashima Y."/>
            <person name="Suzuki O."/>
            <person name="Nakagawa S."/>
            <person name="Senoh A."/>
            <person name="Mizoguchi H."/>
            <person name="Goto Y."/>
            <person name="Shimizu F."/>
            <person name="Wakebe H."/>
            <person name="Hishigaki H."/>
            <person name="Watanabe T."/>
            <person name="Sugiyama A."/>
            <person name="Takemoto M."/>
            <person name="Kawakami B."/>
            <person name="Yamazaki M."/>
            <person name="Watanabe K."/>
            <person name="Kumagai A."/>
            <person name="Itakura S."/>
            <person name="Fukuzumi Y."/>
            <person name="Fujimori Y."/>
            <person name="Komiyama M."/>
            <person name="Tashiro H."/>
            <person name="Tanigami A."/>
            <person name="Fujiwara T."/>
            <person name="Ono T."/>
            <person name="Yamada K."/>
            <person name="Fujii Y."/>
            <person name="Ozaki K."/>
            <person name="Hirao M."/>
            <person name="Ohmori Y."/>
            <person name="Kawabata A."/>
            <person name="Hikiji T."/>
            <person name="Kobatake N."/>
            <person name="Inagaki H."/>
            <person name="Ikema Y."/>
            <person name="Okamoto S."/>
            <person name="Okitani R."/>
            <person name="Kawakami T."/>
            <person name="Noguchi S."/>
            <person name="Itoh T."/>
            <person name="Shigeta K."/>
            <person name="Senba T."/>
            <person name="Matsumura K."/>
            <person name="Nakajima Y."/>
            <person name="Mizuno T."/>
            <person name="Morinaga M."/>
            <person name="Sasaki M."/>
            <person name="Togashi T."/>
            <person name="Oyama M."/>
            <person name="Hata H."/>
            <person name="Watanabe M."/>
            <person name="Komatsu T."/>
            <person name="Mizushima-Sugano J."/>
            <person name="Satoh T."/>
            <person name="Shirai Y."/>
            <person name="Takahashi Y."/>
            <person name="Nakagawa K."/>
            <person name="Okumura K."/>
            <person name="Nagase T."/>
            <person name="Nomura N."/>
            <person name="Kikuchi H."/>
            <person name="Masuho Y."/>
            <person name="Yamashita R."/>
            <person name="Nakai K."/>
            <person name="Yada T."/>
            <person name="Nakamura Y."/>
            <person name="Ohara O."/>
            <person name="Isogai T."/>
            <person name="Sugano S."/>
        </authorList>
    </citation>
    <scope>NUCLEOTIDE SEQUENCE [LARGE SCALE MRNA] (ISOFORMS 1 AND 3)</scope>
    <source>
        <tissue>Brain</tissue>
        <tissue>Thymus</tissue>
    </source>
</reference>
<reference key="3">
    <citation type="journal article" date="2004" name="Nature">
        <title>The DNA sequence and biology of human chromosome 19.</title>
        <authorList>
            <person name="Grimwood J."/>
            <person name="Gordon L.A."/>
            <person name="Olsen A.S."/>
            <person name="Terry A."/>
            <person name="Schmutz J."/>
            <person name="Lamerdin J.E."/>
            <person name="Hellsten U."/>
            <person name="Goodstein D."/>
            <person name="Couronne O."/>
            <person name="Tran-Gyamfi M."/>
            <person name="Aerts A."/>
            <person name="Altherr M."/>
            <person name="Ashworth L."/>
            <person name="Bajorek E."/>
            <person name="Black S."/>
            <person name="Branscomb E."/>
            <person name="Caenepeel S."/>
            <person name="Carrano A.V."/>
            <person name="Caoile C."/>
            <person name="Chan Y.M."/>
            <person name="Christensen M."/>
            <person name="Cleland C.A."/>
            <person name="Copeland A."/>
            <person name="Dalin E."/>
            <person name="Dehal P."/>
            <person name="Denys M."/>
            <person name="Detter J.C."/>
            <person name="Escobar J."/>
            <person name="Flowers D."/>
            <person name="Fotopulos D."/>
            <person name="Garcia C."/>
            <person name="Georgescu A.M."/>
            <person name="Glavina T."/>
            <person name="Gomez M."/>
            <person name="Gonzales E."/>
            <person name="Groza M."/>
            <person name="Hammon N."/>
            <person name="Hawkins T."/>
            <person name="Haydu L."/>
            <person name="Ho I."/>
            <person name="Huang W."/>
            <person name="Israni S."/>
            <person name="Jett J."/>
            <person name="Kadner K."/>
            <person name="Kimball H."/>
            <person name="Kobayashi A."/>
            <person name="Larionov V."/>
            <person name="Leem S.-H."/>
            <person name="Lopez F."/>
            <person name="Lou Y."/>
            <person name="Lowry S."/>
            <person name="Malfatti S."/>
            <person name="Martinez D."/>
            <person name="McCready P.M."/>
            <person name="Medina C."/>
            <person name="Morgan J."/>
            <person name="Nelson K."/>
            <person name="Nolan M."/>
            <person name="Ovcharenko I."/>
            <person name="Pitluck S."/>
            <person name="Pollard M."/>
            <person name="Popkie A.P."/>
            <person name="Predki P."/>
            <person name="Quan G."/>
            <person name="Ramirez L."/>
            <person name="Rash S."/>
            <person name="Retterer J."/>
            <person name="Rodriguez A."/>
            <person name="Rogers S."/>
            <person name="Salamov A."/>
            <person name="Salazar A."/>
            <person name="She X."/>
            <person name="Smith D."/>
            <person name="Slezak T."/>
            <person name="Solovyev V."/>
            <person name="Thayer N."/>
            <person name="Tice H."/>
            <person name="Tsai M."/>
            <person name="Ustaszewska A."/>
            <person name="Vo N."/>
            <person name="Wagner M."/>
            <person name="Wheeler J."/>
            <person name="Wu K."/>
            <person name="Xie G."/>
            <person name="Yang J."/>
            <person name="Dubchak I."/>
            <person name="Furey T.S."/>
            <person name="DeJong P."/>
            <person name="Dickson M."/>
            <person name="Gordon D."/>
            <person name="Eichler E.E."/>
            <person name="Pennacchio L.A."/>
            <person name="Richardson P."/>
            <person name="Stubbs L."/>
            <person name="Rokhsar D.S."/>
            <person name="Myers R.M."/>
            <person name="Rubin E.M."/>
            <person name="Lucas S.M."/>
        </authorList>
    </citation>
    <scope>NUCLEOTIDE SEQUENCE [LARGE SCALE GENOMIC DNA]</scope>
</reference>
<reference key="4">
    <citation type="submission" date="2005-07" db="EMBL/GenBank/DDBJ databases">
        <authorList>
            <person name="Mural R.J."/>
            <person name="Istrail S."/>
            <person name="Sutton G.G."/>
            <person name="Florea L."/>
            <person name="Halpern A.L."/>
            <person name="Mobarry C.M."/>
            <person name="Lippert R."/>
            <person name="Walenz B."/>
            <person name="Shatkay H."/>
            <person name="Dew I."/>
            <person name="Miller J.R."/>
            <person name="Flanigan M.J."/>
            <person name="Edwards N.J."/>
            <person name="Bolanos R."/>
            <person name="Fasulo D."/>
            <person name="Halldorsson B.V."/>
            <person name="Hannenhalli S."/>
            <person name="Turner R."/>
            <person name="Yooseph S."/>
            <person name="Lu F."/>
            <person name="Nusskern D.R."/>
            <person name="Shue B.C."/>
            <person name="Zheng X.H."/>
            <person name="Zhong F."/>
            <person name="Delcher A.L."/>
            <person name="Huson D.H."/>
            <person name="Kravitz S.A."/>
            <person name="Mouchard L."/>
            <person name="Reinert K."/>
            <person name="Remington K.A."/>
            <person name="Clark A.G."/>
            <person name="Waterman M.S."/>
            <person name="Eichler E.E."/>
            <person name="Adams M.D."/>
            <person name="Hunkapiller M.W."/>
            <person name="Myers E.W."/>
            <person name="Venter J.C."/>
        </authorList>
    </citation>
    <scope>NUCLEOTIDE SEQUENCE [LARGE SCALE GENOMIC DNA]</scope>
</reference>
<reference key="5">
    <citation type="journal article" date="2004" name="Genome Res.">
        <title>The status, quality, and expansion of the NIH full-length cDNA project: the Mammalian Gene Collection (MGC).</title>
        <authorList>
            <consortium name="The MGC Project Team"/>
        </authorList>
    </citation>
    <scope>NUCLEOTIDE SEQUENCE [LARGE SCALE MRNA] (ISOFORMS 1 AND 2)</scope>
    <source>
        <tissue>Blood</tissue>
    </source>
</reference>
<reference key="6">
    <citation type="journal article" date="2007" name="Biosci. Biotechnol. Biochem.">
        <title>Dynamic behavior of FCHO1 revealed by live-cell imaging microscopy: its possible involvement in clathrin-coated vesicle formation.</title>
        <authorList>
            <person name="Sakaushi S."/>
            <person name="Inoue K."/>
            <person name="Zushi H."/>
            <person name="Senda-Murata K."/>
            <person name="Fukada T."/>
            <person name="Oka S."/>
            <person name="Sugimoto K."/>
        </authorList>
    </citation>
    <scope>SUBCELLULAR LOCATION</scope>
</reference>
<reference key="7">
    <citation type="journal article" date="2009" name="Sci. Signal.">
        <title>Quantitative phosphoproteomic analysis of T cell receptor signaling reveals system-wide modulation of protein-protein interactions.</title>
        <authorList>
            <person name="Mayya V."/>
            <person name="Lundgren D.H."/>
            <person name="Hwang S.-I."/>
            <person name="Rezaul K."/>
            <person name="Wu L."/>
            <person name="Eng J.K."/>
            <person name="Rodionov V."/>
            <person name="Han D.K."/>
        </authorList>
    </citation>
    <scope>PHOSPHORYLATION [LARGE SCALE ANALYSIS] AT SER-616</scope>
    <scope>IDENTIFICATION BY MASS SPECTROMETRY [LARGE SCALE ANALYSIS]</scope>
    <source>
        <tissue>Leukemic T-cell</tissue>
    </source>
</reference>
<reference key="8">
    <citation type="journal article" date="2010" name="Science">
        <title>FCHo proteins are nucleators of clathrin-mediated endocytosis.</title>
        <authorList>
            <person name="Henne W.M."/>
            <person name="Boucrot E."/>
            <person name="Meinecke M."/>
            <person name="Evergren E."/>
            <person name="Vallis Y."/>
            <person name="Mittal R."/>
            <person name="McMahon H.T."/>
        </authorList>
    </citation>
    <scope>FUNCTION IN CLATHRIN-COATED PITS NUCLEATION</scope>
    <scope>SUBCELLULAR LOCATION</scope>
</reference>
<reference key="9">
    <citation type="journal article" date="2012" name="Nat. Cell Biol.">
        <title>Distinct and separable activities of the endocytic clathrin-coat components Fcho1/2 and AP-2 in developmental patterning.</title>
        <authorList>
            <person name="Umasankar P.K."/>
            <person name="Sanker S."/>
            <person name="Thieman J.R."/>
            <person name="Chakraborty S."/>
            <person name="Wendland B."/>
            <person name="Tsang M."/>
            <person name="Traub L.M."/>
        </authorList>
    </citation>
    <scope>LIPID-BINDING</scope>
    <scope>INTERACTION WITH ACVR1; AGFG1; AP2A2; AP2B1; CALM; DAB2; EPS15; EPS15R; ITSN1 AND CLATHRIN</scope>
</reference>
<reference key="10">
    <citation type="journal article" date="2013" name="J. Proteome Res.">
        <title>Toward a comprehensive characterization of a human cancer cell phosphoproteome.</title>
        <authorList>
            <person name="Zhou H."/>
            <person name="Di Palma S."/>
            <person name="Preisinger C."/>
            <person name="Peng M."/>
            <person name="Polat A.N."/>
            <person name="Heck A.J."/>
            <person name="Mohammed S."/>
        </authorList>
    </citation>
    <scope>PHOSPHORYLATION [LARGE SCALE ANALYSIS] AT SER-295; SER-347 AND SER-372</scope>
    <scope>IDENTIFICATION BY MASS SPECTROMETRY [LARGE SCALE ANALYSIS]</scope>
    <source>
        <tissue>Erythroleukemia</tissue>
    </source>
</reference>
<reference key="11">
    <citation type="journal article" date="2019" name="J. Allergy Clin. Immunol.">
        <title>F-BAR domain only protein 1 (FCHO1) deficiency is a novel cause of combined immune deficiency in human subjects.</title>
        <authorList>
            <person name="Calzoni E."/>
            <person name="Platt C.D."/>
            <person name="Keles S."/>
            <person name="Kuehn H.S."/>
            <person name="Beaussant-Cohen S."/>
            <person name="Zhang Y."/>
            <person name="Pazmandi J."/>
            <person name="Lanzi G."/>
            <person name="Pala F."/>
            <person name="Tahiat A."/>
            <person name="Artac H."/>
            <person name="Heredia R.J."/>
            <person name="Dmytrus J."/>
            <person name="Reisli I."/>
            <person name="Uygun V."/>
            <person name="Uygun D."/>
            <person name="Bingol A."/>
            <person name="Basaran E."/>
            <person name="Djenouhat K."/>
            <person name="Benhalla N."/>
            <person name="Bendahmane C."/>
            <person name="Emiroglu M."/>
            <person name="Kirchhausen T."/>
            <person name="Pasham M."/>
            <person name="Jones J."/>
            <person name="Wallace J.G."/>
            <person name="Zheng L."/>
            <person name="Boisson B."/>
            <person name="Porta F."/>
            <person name="Rosenzweig S.D."/>
            <person name="Su H."/>
            <person name="Giliani S."/>
            <person name="Lenardo M."/>
            <person name="Geha R.S."/>
            <person name="Boztug K."/>
            <person name="Chou J."/>
            <person name="Notarangelo L.D."/>
        </authorList>
    </citation>
    <scope>INVOLVEMENT IN IMD76</scope>
    <scope>TISSUE SPECIFICITY</scope>
    <scope>FUNCTION</scope>
</reference>
<reference key="12">
    <citation type="journal article" date="2020" name="Nat. Commun.">
        <title>Human FCHO1 deficiency reveals role for clathrin-mediated endocytosis in development and function of T cells.</title>
        <authorList>
            <person name="Lyszkiewicz M."/>
            <person name="Zietara N."/>
            <person name="Frey L."/>
            <person name="Pannicke U."/>
            <person name="Stern M."/>
            <person name="Liu Y."/>
            <person name="Fan Y."/>
            <person name="Puchalka J."/>
            <person name="Hollizeck S."/>
            <person name="Somekh I."/>
            <person name="Rohlfs M."/>
            <person name="Yilmaz T."/>
            <person name="Uenal E."/>
            <person name="Karakukcu M."/>
            <person name="Patiroglu T."/>
            <person name="Kellerer C."/>
            <person name="Karasu E."/>
            <person name="Sykora K.W."/>
            <person name="Lev A."/>
            <person name="Simon A."/>
            <person name="Somech R."/>
            <person name="Roesler J."/>
            <person name="Hoenig M."/>
            <person name="Keppler O.T."/>
            <person name="Schwarz K."/>
            <person name="Klein C."/>
        </authorList>
    </citation>
    <scope>VARIANTS IMD76 PRO-34; 650-ARG--CYS-889 DEL AND PRO-679</scope>
    <scope>CHARACTERIZATION OF VARIANTS IMD76 PRO-34; 650-ARG--CYS-889 DEL AND PRO-679</scope>
    <scope>SUBCELLULAR LOCATION</scope>
</reference>
<reference key="13">
    <citation type="journal article" date="2020" name="Nat. Commun.">
        <title>Author Correction: Human FCHO1 deficiency reveals role for clathrin-mediated endocytosis in development and function of T cells.</title>
        <authorList>
            <person name="Lyszkiewicz M."/>
            <person name="Zietara N."/>
            <person name="Frey L."/>
            <person name="Pannicke U."/>
            <person name="Stern M."/>
            <person name="Liu Y."/>
            <person name="Fan Y."/>
            <person name="Puchalka J."/>
            <person name="Hollizeck S."/>
            <person name="Somekh I."/>
            <person name="Rohlfs M."/>
            <person name="Yilmaz T."/>
            <person name="Uenal E."/>
            <person name="Karakukcu M."/>
            <person name="Patiroglu T."/>
            <person name="Kellerer C."/>
            <person name="Karasu E."/>
            <person name="Sykora K.W."/>
            <person name="Lev A."/>
            <person name="Simon A."/>
            <person name="Somech R."/>
            <person name="Roesler J."/>
            <person name="Hoenig M."/>
            <person name="Keppler O.T."/>
            <person name="Schwarz K."/>
            <person name="Klein C."/>
        </authorList>
    </citation>
    <scope>ERRATUM OF PUBMED:32098969</scope>
</reference>
<gene>
    <name evidence="16" type="primary">FCHO1</name>
    <name type="synonym">KIAA0290</name>
</gene>
<protein>
    <recommendedName>
        <fullName evidence="12">F-BAR domain only protein 1</fullName>
    </recommendedName>
</protein>
<accession>O14526</accession>
<accession>A6NHE6</accession>
<accession>A8K5U5</accession>
<accession>B4E120</accession>
<accession>Q05C93</accession>
<accession>Q8IW22</accession>
<name>FCHO1_HUMAN</name>
<evidence type="ECO:0000250" key="1">
    <source>
        <dbReference type="UniProtKB" id="Q8K285"/>
    </source>
</evidence>
<evidence type="ECO:0000255" key="2"/>
<evidence type="ECO:0000255" key="3">
    <source>
        <dbReference type="PROSITE-ProRule" id="PRU00404"/>
    </source>
</evidence>
<evidence type="ECO:0000255" key="4">
    <source>
        <dbReference type="PROSITE-ProRule" id="PRU01077"/>
    </source>
</evidence>
<evidence type="ECO:0000256" key="5">
    <source>
        <dbReference type="SAM" id="MobiDB-lite"/>
    </source>
</evidence>
<evidence type="ECO:0000269" key="6">
    <source>
    </source>
</evidence>
<evidence type="ECO:0000269" key="7">
    <source>
    </source>
</evidence>
<evidence type="ECO:0000269" key="8">
    <source>
    </source>
</evidence>
<evidence type="ECO:0000269" key="9">
    <source>
    </source>
</evidence>
<evidence type="ECO:0000303" key="10">
    <source>
    </source>
</evidence>
<evidence type="ECO:0000303" key="11">
    <source>
    </source>
</evidence>
<evidence type="ECO:0000305" key="12"/>
<evidence type="ECO:0000305" key="13">
    <source>
    </source>
</evidence>
<evidence type="ECO:0000305" key="14">
    <source>
    </source>
</evidence>
<evidence type="ECO:0000305" key="15">
    <source>
    </source>
</evidence>
<evidence type="ECO:0000312" key="16">
    <source>
        <dbReference type="HGNC" id="HGNC:29002"/>
    </source>
</evidence>
<evidence type="ECO:0007744" key="17">
    <source>
    </source>
</evidence>
<evidence type="ECO:0007744" key="18">
    <source>
    </source>
</evidence>
<evidence type="ECO:0007829" key="19">
    <source>
        <dbReference type="PDB" id="7OHI"/>
    </source>
</evidence>